<keyword id="KW-0067">ATP-binding</keyword>
<keyword id="KW-0319">Glycerol metabolism</keyword>
<keyword id="KW-0418">Kinase</keyword>
<keyword id="KW-0547">Nucleotide-binding</keyword>
<keyword id="KW-1185">Reference proteome</keyword>
<keyword id="KW-0808">Transferase</keyword>
<sequence>MFMSSFIMAIDQGTTSSRTCIINQAGGLVAEAREAFKQIFPKPGWVEHDPEDIWYSTQRSMRLALEKAKIKGSQIRTIGITNQRETVMLWDAKSGKALHNAIVWQCRRTQDLCEKLKKNKKEKIITAKTGLVLDPYFSATKIQWLLKNVPNAAKKAKDGQALAGTVDSFLLWKLTAGHSHKTDVSNASRTMLMNIHTGWWDEDLLKIFGVPEAILPEICPSNSDFGVTQGLGFMPDGIPITGIVGDQQAALFGQTCFETGDSKCTFGTGSFLLLNTGKKAVKSKNKLLTTIAWKLKNQEMTYALEGGAFVCGAAVQWLRDGLGLIQQSSDVEALAKTVDGTDGVEFVPALTGLGAPHWQPEARGLICGLTRGSTKAHIARATLEAMALQNVDILNTMQRDLGKKLRGVRVDGGAAANDLLMQMQADYCGANVVRPQNLETTALGAAFMAGLGAGVWKDLKEIKRVWKVNKEFKVKMTPKARKERLQRWAQALERV</sequence>
<comment type="function">
    <text evidence="1">Key enzyme in the regulation of glycerol uptake and metabolism. Catalyzes the phosphorylation of glycerol to yield sn-glycerol 3-phosphate.</text>
</comment>
<comment type="catalytic activity">
    <reaction evidence="1">
        <text>glycerol + ATP = sn-glycerol 3-phosphate + ADP + H(+)</text>
        <dbReference type="Rhea" id="RHEA:21644"/>
        <dbReference type="ChEBI" id="CHEBI:15378"/>
        <dbReference type="ChEBI" id="CHEBI:17754"/>
        <dbReference type="ChEBI" id="CHEBI:30616"/>
        <dbReference type="ChEBI" id="CHEBI:57597"/>
        <dbReference type="ChEBI" id="CHEBI:456216"/>
        <dbReference type="EC" id="2.7.1.30"/>
    </reaction>
</comment>
<comment type="activity regulation">
    <text evidence="1">Inhibited by fructose 1,6-bisphosphate (FBP).</text>
</comment>
<comment type="pathway">
    <text evidence="1">Polyol metabolism; glycerol degradation via glycerol kinase pathway; sn-glycerol 3-phosphate from glycerol: step 1/1.</text>
</comment>
<comment type="similarity">
    <text evidence="1">Belongs to the FGGY kinase family.</text>
</comment>
<name>GLPK_BDEBA</name>
<evidence type="ECO:0000255" key="1">
    <source>
        <dbReference type="HAMAP-Rule" id="MF_00186"/>
    </source>
</evidence>
<proteinExistence type="inferred from homology"/>
<protein>
    <recommendedName>
        <fullName evidence="1">Glycerol kinase</fullName>
        <ecNumber evidence="1">2.7.1.30</ecNumber>
    </recommendedName>
    <alternativeName>
        <fullName evidence="1">ATP:glycerol 3-phosphotransferase</fullName>
    </alternativeName>
    <alternativeName>
        <fullName evidence="1">Glycerokinase</fullName>
        <shortName evidence="1">GK</shortName>
    </alternativeName>
</protein>
<organism>
    <name type="scientific">Bdellovibrio bacteriovorus (strain ATCC 15356 / DSM 50701 / NCIMB 9529 / HD100)</name>
    <dbReference type="NCBI Taxonomy" id="264462"/>
    <lineage>
        <taxon>Bacteria</taxon>
        <taxon>Pseudomonadati</taxon>
        <taxon>Bdellovibrionota</taxon>
        <taxon>Bdellovibrionia</taxon>
        <taxon>Bdellovibrionales</taxon>
        <taxon>Pseudobdellovibrionaceae</taxon>
        <taxon>Bdellovibrio</taxon>
    </lineage>
</organism>
<dbReference type="EC" id="2.7.1.30" evidence="1"/>
<dbReference type="EMBL" id="BX842653">
    <property type="protein sequence ID" value="CAE80508.1"/>
    <property type="molecule type" value="Genomic_DNA"/>
</dbReference>
<dbReference type="SMR" id="Q6MJQ2"/>
<dbReference type="STRING" id="264462.Bd2718"/>
<dbReference type="KEGG" id="bba:Bd2718"/>
<dbReference type="eggNOG" id="COG0554">
    <property type="taxonomic scope" value="Bacteria"/>
</dbReference>
<dbReference type="HOGENOM" id="CLU_009281_2_3_7"/>
<dbReference type="UniPathway" id="UPA00618">
    <property type="reaction ID" value="UER00672"/>
</dbReference>
<dbReference type="Proteomes" id="UP000008080">
    <property type="component" value="Chromosome"/>
</dbReference>
<dbReference type="GO" id="GO:0005829">
    <property type="term" value="C:cytosol"/>
    <property type="evidence" value="ECO:0007669"/>
    <property type="project" value="TreeGrafter"/>
</dbReference>
<dbReference type="GO" id="GO:0005524">
    <property type="term" value="F:ATP binding"/>
    <property type="evidence" value="ECO:0007669"/>
    <property type="project" value="UniProtKB-UniRule"/>
</dbReference>
<dbReference type="GO" id="GO:0004370">
    <property type="term" value="F:glycerol kinase activity"/>
    <property type="evidence" value="ECO:0000250"/>
    <property type="project" value="UniProtKB"/>
</dbReference>
<dbReference type="GO" id="GO:0019563">
    <property type="term" value="P:glycerol catabolic process"/>
    <property type="evidence" value="ECO:0007669"/>
    <property type="project" value="UniProtKB-UniRule"/>
</dbReference>
<dbReference type="GO" id="GO:0006071">
    <property type="term" value="P:glycerol metabolic process"/>
    <property type="evidence" value="ECO:0000250"/>
    <property type="project" value="UniProtKB"/>
</dbReference>
<dbReference type="GO" id="GO:0006072">
    <property type="term" value="P:glycerol-3-phosphate metabolic process"/>
    <property type="evidence" value="ECO:0007669"/>
    <property type="project" value="InterPro"/>
</dbReference>
<dbReference type="CDD" id="cd07786">
    <property type="entry name" value="FGGY_EcGK_like"/>
    <property type="match status" value="1"/>
</dbReference>
<dbReference type="FunFam" id="3.30.420.40:FF:000007">
    <property type="entry name" value="Glycerol kinase"/>
    <property type="match status" value="1"/>
</dbReference>
<dbReference type="FunFam" id="3.30.420.40:FF:000008">
    <property type="entry name" value="Glycerol kinase"/>
    <property type="match status" value="1"/>
</dbReference>
<dbReference type="Gene3D" id="3.30.420.40">
    <property type="match status" value="2"/>
</dbReference>
<dbReference type="HAMAP" id="MF_00186">
    <property type="entry name" value="Glycerol_kin"/>
    <property type="match status" value="1"/>
</dbReference>
<dbReference type="InterPro" id="IPR043129">
    <property type="entry name" value="ATPase_NBD"/>
</dbReference>
<dbReference type="InterPro" id="IPR000577">
    <property type="entry name" value="Carb_kinase_FGGY"/>
</dbReference>
<dbReference type="InterPro" id="IPR018483">
    <property type="entry name" value="Carb_kinase_FGGY_CS"/>
</dbReference>
<dbReference type="InterPro" id="IPR018485">
    <property type="entry name" value="FGGY_C"/>
</dbReference>
<dbReference type="InterPro" id="IPR018484">
    <property type="entry name" value="FGGY_N"/>
</dbReference>
<dbReference type="InterPro" id="IPR005999">
    <property type="entry name" value="Glycerol_kin"/>
</dbReference>
<dbReference type="NCBIfam" id="TIGR01311">
    <property type="entry name" value="glycerol_kin"/>
    <property type="match status" value="1"/>
</dbReference>
<dbReference type="NCBIfam" id="NF000756">
    <property type="entry name" value="PRK00047.1"/>
    <property type="match status" value="1"/>
</dbReference>
<dbReference type="PANTHER" id="PTHR10196:SF69">
    <property type="entry name" value="GLYCEROL KINASE"/>
    <property type="match status" value="1"/>
</dbReference>
<dbReference type="PANTHER" id="PTHR10196">
    <property type="entry name" value="SUGAR KINASE"/>
    <property type="match status" value="1"/>
</dbReference>
<dbReference type="Pfam" id="PF02782">
    <property type="entry name" value="FGGY_C"/>
    <property type="match status" value="1"/>
</dbReference>
<dbReference type="Pfam" id="PF00370">
    <property type="entry name" value="FGGY_N"/>
    <property type="match status" value="1"/>
</dbReference>
<dbReference type="PIRSF" id="PIRSF000538">
    <property type="entry name" value="GlpK"/>
    <property type="match status" value="1"/>
</dbReference>
<dbReference type="SUPFAM" id="SSF53067">
    <property type="entry name" value="Actin-like ATPase domain"/>
    <property type="match status" value="2"/>
</dbReference>
<dbReference type="PROSITE" id="PS00933">
    <property type="entry name" value="FGGY_KINASES_1"/>
    <property type="match status" value="1"/>
</dbReference>
<dbReference type="PROSITE" id="PS00445">
    <property type="entry name" value="FGGY_KINASES_2"/>
    <property type="match status" value="1"/>
</dbReference>
<accession>Q6MJQ2</accession>
<reference key="1">
    <citation type="journal article" date="2004" name="Science">
        <title>A predator unmasked: life cycle of Bdellovibrio bacteriovorus from a genomic perspective.</title>
        <authorList>
            <person name="Rendulic S."/>
            <person name="Jagtap P."/>
            <person name="Rosinus A."/>
            <person name="Eppinger M."/>
            <person name="Baar C."/>
            <person name="Lanz C."/>
            <person name="Keller H."/>
            <person name="Lambert C."/>
            <person name="Evans K.J."/>
            <person name="Goesmann A."/>
            <person name="Meyer F."/>
            <person name="Sockett R.E."/>
            <person name="Schuster S.C."/>
        </authorList>
    </citation>
    <scope>NUCLEOTIDE SEQUENCE [LARGE SCALE GENOMIC DNA]</scope>
    <source>
        <strain>ATCC 15356 / DSM 50701 / NCIMB 9529 / HD100</strain>
    </source>
</reference>
<gene>
    <name evidence="1" type="primary">glpK</name>
    <name type="ordered locus">Bd2718</name>
</gene>
<feature type="chain" id="PRO_1000020703" description="Glycerol kinase">
    <location>
        <begin position="1"/>
        <end position="495"/>
    </location>
</feature>
<feature type="binding site" evidence="1">
    <location>
        <position position="14"/>
    </location>
    <ligand>
        <name>ADP</name>
        <dbReference type="ChEBI" id="CHEBI:456216"/>
    </ligand>
</feature>
<feature type="binding site" evidence="1">
    <location>
        <position position="14"/>
    </location>
    <ligand>
        <name>ATP</name>
        <dbReference type="ChEBI" id="CHEBI:30616"/>
    </ligand>
</feature>
<feature type="binding site" evidence="1">
    <location>
        <position position="14"/>
    </location>
    <ligand>
        <name>sn-glycerol 3-phosphate</name>
        <dbReference type="ChEBI" id="CHEBI:57597"/>
    </ligand>
</feature>
<feature type="binding site" evidence="1">
    <location>
        <position position="15"/>
    </location>
    <ligand>
        <name>ATP</name>
        <dbReference type="ChEBI" id="CHEBI:30616"/>
    </ligand>
</feature>
<feature type="binding site" evidence="1">
    <location>
        <position position="16"/>
    </location>
    <ligand>
        <name>ATP</name>
        <dbReference type="ChEBI" id="CHEBI:30616"/>
    </ligand>
</feature>
<feature type="binding site" evidence="1">
    <location>
        <position position="18"/>
    </location>
    <ligand>
        <name>ADP</name>
        <dbReference type="ChEBI" id="CHEBI:456216"/>
    </ligand>
</feature>
<feature type="binding site" evidence="1">
    <location>
        <position position="84"/>
    </location>
    <ligand>
        <name>glycerol</name>
        <dbReference type="ChEBI" id="CHEBI:17754"/>
    </ligand>
</feature>
<feature type="binding site" evidence="1">
    <location>
        <position position="84"/>
    </location>
    <ligand>
        <name>sn-glycerol 3-phosphate</name>
        <dbReference type="ChEBI" id="CHEBI:57597"/>
    </ligand>
</feature>
<feature type="binding site" evidence="1">
    <location>
        <position position="85"/>
    </location>
    <ligand>
        <name>glycerol</name>
        <dbReference type="ChEBI" id="CHEBI:17754"/>
    </ligand>
</feature>
<feature type="binding site" evidence="1">
    <location>
        <position position="85"/>
    </location>
    <ligand>
        <name>sn-glycerol 3-phosphate</name>
        <dbReference type="ChEBI" id="CHEBI:57597"/>
    </ligand>
</feature>
<feature type="binding site" evidence="1">
    <location>
        <position position="136"/>
    </location>
    <ligand>
        <name>glycerol</name>
        <dbReference type="ChEBI" id="CHEBI:17754"/>
    </ligand>
</feature>
<feature type="binding site" evidence="1">
    <location>
        <position position="136"/>
    </location>
    <ligand>
        <name>sn-glycerol 3-phosphate</name>
        <dbReference type="ChEBI" id="CHEBI:57597"/>
    </ligand>
</feature>
<feature type="binding site" evidence="1">
    <location>
        <position position="246"/>
    </location>
    <ligand>
        <name>glycerol</name>
        <dbReference type="ChEBI" id="CHEBI:17754"/>
    </ligand>
</feature>
<feature type="binding site" evidence="1">
    <location>
        <position position="246"/>
    </location>
    <ligand>
        <name>sn-glycerol 3-phosphate</name>
        <dbReference type="ChEBI" id="CHEBI:57597"/>
    </ligand>
</feature>
<feature type="binding site" evidence="1">
    <location>
        <position position="247"/>
    </location>
    <ligand>
        <name>glycerol</name>
        <dbReference type="ChEBI" id="CHEBI:17754"/>
    </ligand>
</feature>
<feature type="binding site" evidence="1">
    <location>
        <position position="268"/>
    </location>
    <ligand>
        <name>ADP</name>
        <dbReference type="ChEBI" id="CHEBI:456216"/>
    </ligand>
</feature>
<feature type="binding site" evidence="1">
    <location>
        <position position="268"/>
    </location>
    <ligand>
        <name>ATP</name>
        <dbReference type="ChEBI" id="CHEBI:30616"/>
    </ligand>
</feature>
<feature type="binding site" evidence="1">
    <location>
        <position position="312"/>
    </location>
    <ligand>
        <name>ADP</name>
        <dbReference type="ChEBI" id="CHEBI:456216"/>
    </ligand>
</feature>
<feature type="binding site" evidence="1">
    <location>
        <position position="312"/>
    </location>
    <ligand>
        <name>ATP</name>
        <dbReference type="ChEBI" id="CHEBI:30616"/>
    </ligand>
</feature>
<feature type="binding site" evidence="1">
    <location>
        <position position="316"/>
    </location>
    <ligand>
        <name>ATP</name>
        <dbReference type="ChEBI" id="CHEBI:30616"/>
    </ligand>
</feature>
<feature type="binding site" evidence="1">
    <location>
        <position position="413"/>
    </location>
    <ligand>
        <name>ADP</name>
        <dbReference type="ChEBI" id="CHEBI:456216"/>
    </ligand>
</feature>
<feature type="binding site" evidence="1">
    <location>
        <position position="413"/>
    </location>
    <ligand>
        <name>ATP</name>
        <dbReference type="ChEBI" id="CHEBI:30616"/>
    </ligand>
</feature>
<feature type="binding site" evidence="1">
    <location>
        <position position="417"/>
    </location>
    <ligand>
        <name>ADP</name>
        <dbReference type="ChEBI" id="CHEBI:456216"/>
    </ligand>
</feature>